<accession>Q4KFD4</accession>
<name>RLMM_PSEF5</name>
<dbReference type="EC" id="2.1.1.186" evidence="1"/>
<dbReference type="EMBL" id="CP000076">
    <property type="protein sequence ID" value="AAY91217.1"/>
    <property type="molecule type" value="Genomic_DNA"/>
</dbReference>
<dbReference type="RefSeq" id="WP_011060250.1">
    <property type="nucleotide sequence ID" value="NC_004129.6"/>
</dbReference>
<dbReference type="SMR" id="Q4KFD4"/>
<dbReference type="STRING" id="220664.PFL_1930"/>
<dbReference type="DNASU" id="3477621"/>
<dbReference type="KEGG" id="pfl:PFL_1930"/>
<dbReference type="PATRIC" id="fig|220664.5.peg.1969"/>
<dbReference type="eggNOG" id="COG2933">
    <property type="taxonomic scope" value="Bacteria"/>
</dbReference>
<dbReference type="HOGENOM" id="CLU_043780_0_0_6"/>
<dbReference type="Proteomes" id="UP000008540">
    <property type="component" value="Chromosome"/>
</dbReference>
<dbReference type="GO" id="GO:0005737">
    <property type="term" value="C:cytoplasm"/>
    <property type="evidence" value="ECO:0007669"/>
    <property type="project" value="UniProtKB-SubCell"/>
</dbReference>
<dbReference type="GO" id="GO:0008757">
    <property type="term" value="F:S-adenosylmethionine-dependent methyltransferase activity"/>
    <property type="evidence" value="ECO:0007669"/>
    <property type="project" value="UniProtKB-UniRule"/>
</dbReference>
<dbReference type="GO" id="GO:0032259">
    <property type="term" value="P:methylation"/>
    <property type="evidence" value="ECO:0007669"/>
    <property type="project" value="UniProtKB-KW"/>
</dbReference>
<dbReference type="GO" id="GO:0006364">
    <property type="term" value="P:rRNA processing"/>
    <property type="evidence" value="ECO:0007669"/>
    <property type="project" value="UniProtKB-UniRule"/>
</dbReference>
<dbReference type="Gene3D" id="3.30.2300.20">
    <property type="match status" value="1"/>
</dbReference>
<dbReference type="Gene3D" id="3.30.70.2810">
    <property type="match status" value="1"/>
</dbReference>
<dbReference type="Gene3D" id="3.40.50.150">
    <property type="entry name" value="Vaccinia Virus protein VP39"/>
    <property type="match status" value="1"/>
</dbReference>
<dbReference type="HAMAP" id="MF_01551">
    <property type="entry name" value="23SrRNA_methyltr_M"/>
    <property type="match status" value="1"/>
</dbReference>
<dbReference type="InterPro" id="IPR040739">
    <property type="entry name" value="RlmM_FDX"/>
</dbReference>
<dbReference type="InterPro" id="IPR048646">
    <property type="entry name" value="RlmM_THUMP-like"/>
</dbReference>
<dbReference type="InterPro" id="IPR002877">
    <property type="entry name" value="RNA_MeTrfase_FtsJ_dom"/>
</dbReference>
<dbReference type="InterPro" id="IPR011224">
    <property type="entry name" value="rRNA_MeTrfase_M"/>
</dbReference>
<dbReference type="InterPro" id="IPR029063">
    <property type="entry name" value="SAM-dependent_MTases_sf"/>
</dbReference>
<dbReference type="NCBIfam" id="NF008734">
    <property type="entry name" value="PRK11760.1"/>
    <property type="match status" value="1"/>
</dbReference>
<dbReference type="PANTHER" id="PTHR37524">
    <property type="entry name" value="RIBOSOMAL RNA LARGE SUBUNIT METHYLTRANSFERASE M"/>
    <property type="match status" value="1"/>
</dbReference>
<dbReference type="PANTHER" id="PTHR37524:SF2">
    <property type="entry name" value="RIBOSOMAL RNA METHYLTRANSFERASE FTSJ DOMAIN-CONTAINING PROTEIN"/>
    <property type="match status" value="1"/>
</dbReference>
<dbReference type="Pfam" id="PF01728">
    <property type="entry name" value="FtsJ"/>
    <property type="match status" value="1"/>
</dbReference>
<dbReference type="Pfam" id="PF18125">
    <property type="entry name" value="RlmM_FDX"/>
    <property type="match status" value="1"/>
</dbReference>
<dbReference type="Pfam" id="PF21239">
    <property type="entry name" value="RLMM_N"/>
    <property type="match status" value="1"/>
</dbReference>
<dbReference type="PIRSF" id="PIRSF028774">
    <property type="entry name" value="UCP028774"/>
    <property type="match status" value="1"/>
</dbReference>
<dbReference type="SUPFAM" id="SSF53335">
    <property type="entry name" value="S-adenosyl-L-methionine-dependent methyltransferases"/>
    <property type="match status" value="1"/>
</dbReference>
<comment type="function">
    <text evidence="1">Catalyzes the 2'-O-methylation at nucleotide C2498 in 23S rRNA.</text>
</comment>
<comment type="catalytic activity">
    <reaction evidence="1">
        <text>cytidine(2498) in 23S rRNA + S-adenosyl-L-methionine = 2'-O-methylcytidine(2498) in 23S rRNA + S-adenosyl-L-homocysteine + H(+)</text>
        <dbReference type="Rhea" id="RHEA:42788"/>
        <dbReference type="Rhea" id="RHEA-COMP:10244"/>
        <dbReference type="Rhea" id="RHEA-COMP:10245"/>
        <dbReference type="ChEBI" id="CHEBI:15378"/>
        <dbReference type="ChEBI" id="CHEBI:57856"/>
        <dbReference type="ChEBI" id="CHEBI:59789"/>
        <dbReference type="ChEBI" id="CHEBI:74495"/>
        <dbReference type="ChEBI" id="CHEBI:82748"/>
        <dbReference type="EC" id="2.1.1.186"/>
    </reaction>
</comment>
<comment type="subunit">
    <text evidence="1">Monomer.</text>
</comment>
<comment type="subcellular location">
    <subcellularLocation>
        <location evidence="1">Cytoplasm</location>
    </subcellularLocation>
</comment>
<comment type="similarity">
    <text evidence="1">Belongs to the class I-like SAM-binding methyltransferase superfamily. RNA methyltransferase RlmE family. RlmM subfamily.</text>
</comment>
<organism>
    <name type="scientific">Pseudomonas fluorescens (strain ATCC BAA-477 / NRRL B-23932 / Pf-5)</name>
    <dbReference type="NCBI Taxonomy" id="220664"/>
    <lineage>
        <taxon>Bacteria</taxon>
        <taxon>Pseudomonadati</taxon>
        <taxon>Pseudomonadota</taxon>
        <taxon>Gammaproteobacteria</taxon>
        <taxon>Pseudomonadales</taxon>
        <taxon>Pseudomonadaceae</taxon>
        <taxon>Pseudomonas</taxon>
    </lineage>
</organism>
<gene>
    <name evidence="1" type="primary">rlmM</name>
    <name type="ordered locus">PFL_1930</name>
</gene>
<reference key="1">
    <citation type="journal article" date="2005" name="Nat. Biotechnol.">
        <title>Complete genome sequence of the plant commensal Pseudomonas fluorescens Pf-5.</title>
        <authorList>
            <person name="Paulsen I.T."/>
            <person name="Press C.M."/>
            <person name="Ravel J."/>
            <person name="Kobayashi D.Y."/>
            <person name="Myers G.S.A."/>
            <person name="Mavrodi D.V."/>
            <person name="DeBoy R.T."/>
            <person name="Seshadri R."/>
            <person name="Ren Q."/>
            <person name="Madupu R."/>
            <person name="Dodson R.J."/>
            <person name="Durkin A.S."/>
            <person name="Brinkac L.M."/>
            <person name="Daugherty S.C."/>
            <person name="Sullivan S.A."/>
            <person name="Rosovitz M.J."/>
            <person name="Gwinn M.L."/>
            <person name="Zhou L."/>
            <person name="Schneider D.J."/>
            <person name="Cartinhour S.W."/>
            <person name="Nelson W.C."/>
            <person name="Weidman J."/>
            <person name="Watkins K."/>
            <person name="Tran K."/>
            <person name="Khouri H."/>
            <person name="Pierson E.A."/>
            <person name="Pierson L.S. III"/>
            <person name="Thomashow L.S."/>
            <person name="Loper J.E."/>
        </authorList>
    </citation>
    <scope>NUCLEOTIDE SEQUENCE [LARGE SCALE GENOMIC DNA]</scope>
    <source>
        <strain>ATCC BAA-477 / NRRL B-23932 / Pf-5</strain>
    </source>
</reference>
<sequence length="357" mass="40128">MNTLFIHCRPGFEGEVCSEIADHAARLNVAGYAKAKPSTACAEFICTEDDGAQRLMQGLRFPELIFPRQWARGGFIDLPETDRISVILAYLANFPQCGSLWLEVVDTNDGKELSNFCKKFEAPLRKALTAAGKLVDDATKPRLLLTFKSGREVFVGLADAGNSAMWPMGIPRLKFPREAPSRSTLKLEEAWHHFIPRDQWDERLHGDMTGVDLGAAPGGWTWQLVNRGMLVTAVDNGPMAESLMDTGLVQHLMADGFTYKPRQPVDWMVCDIVEKPARNAALLETWIGEGHCREAVVNLKLPMRQRYAEVKRLLERIEEGFKARGIRVAIGCKQLYHDREEVTCHLRRLDLKKPKSA</sequence>
<keyword id="KW-0963">Cytoplasm</keyword>
<keyword id="KW-0489">Methyltransferase</keyword>
<keyword id="KW-0698">rRNA processing</keyword>
<keyword id="KW-0949">S-adenosyl-L-methionine</keyword>
<keyword id="KW-0808">Transferase</keyword>
<proteinExistence type="inferred from homology"/>
<evidence type="ECO:0000255" key="1">
    <source>
        <dbReference type="HAMAP-Rule" id="MF_01551"/>
    </source>
</evidence>
<feature type="chain" id="PRO_0000070417" description="Ribosomal RNA large subunit methyltransferase M">
    <location>
        <begin position="1"/>
        <end position="357"/>
    </location>
</feature>
<feature type="active site" description="Proton acceptor" evidence="1">
    <location>
        <position position="300"/>
    </location>
</feature>
<feature type="binding site" evidence="1">
    <location>
        <position position="183"/>
    </location>
    <ligand>
        <name>S-adenosyl-L-methionine</name>
        <dbReference type="ChEBI" id="CHEBI:59789"/>
    </ligand>
</feature>
<feature type="binding site" evidence="1">
    <location>
        <begin position="216"/>
        <end position="219"/>
    </location>
    <ligand>
        <name>S-adenosyl-L-methionine</name>
        <dbReference type="ChEBI" id="CHEBI:59789"/>
    </ligand>
</feature>
<feature type="binding site" evidence="1">
    <location>
        <position position="235"/>
    </location>
    <ligand>
        <name>S-adenosyl-L-methionine</name>
        <dbReference type="ChEBI" id="CHEBI:59789"/>
    </ligand>
</feature>
<feature type="binding site" evidence="1">
    <location>
        <position position="255"/>
    </location>
    <ligand>
        <name>S-adenosyl-L-methionine</name>
        <dbReference type="ChEBI" id="CHEBI:59789"/>
    </ligand>
</feature>
<feature type="binding site" evidence="1">
    <location>
        <position position="271"/>
    </location>
    <ligand>
        <name>S-adenosyl-L-methionine</name>
        <dbReference type="ChEBI" id="CHEBI:59789"/>
    </ligand>
</feature>
<protein>
    <recommendedName>
        <fullName evidence="1">Ribosomal RNA large subunit methyltransferase M</fullName>
        <ecNumber evidence="1">2.1.1.186</ecNumber>
    </recommendedName>
    <alternativeName>
        <fullName evidence="1">23S rRNA (cytidine2498-2'-O)-methyltransferase</fullName>
    </alternativeName>
    <alternativeName>
        <fullName evidence="1">23S rRNA 2'-O-ribose methyltransferase RlmM</fullName>
    </alternativeName>
</protein>